<accession>O34988</accession>
<reference key="1">
    <citation type="journal article" date="1997" name="Nature">
        <title>The complete genome sequence of the Gram-positive bacterium Bacillus subtilis.</title>
        <authorList>
            <person name="Kunst F."/>
            <person name="Ogasawara N."/>
            <person name="Moszer I."/>
            <person name="Albertini A.M."/>
            <person name="Alloni G."/>
            <person name="Azevedo V."/>
            <person name="Bertero M.G."/>
            <person name="Bessieres P."/>
            <person name="Bolotin A."/>
            <person name="Borchert S."/>
            <person name="Borriss R."/>
            <person name="Boursier L."/>
            <person name="Brans A."/>
            <person name="Braun M."/>
            <person name="Brignell S.C."/>
            <person name="Bron S."/>
            <person name="Brouillet S."/>
            <person name="Bruschi C.V."/>
            <person name="Caldwell B."/>
            <person name="Capuano V."/>
            <person name="Carter N.M."/>
            <person name="Choi S.-K."/>
            <person name="Codani J.-J."/>
            <person name="Connerton I.F."/>
            <person name="Cummings N.J."/>
            <person name="Daniel R.A."/>
            <person name="Denizot F."/>
            <person name="Devine K.M."/>
            <person name="Duesterhoeft A."/>
            <person name="Ehrlich S.D."/>
            <person name="Emmerson P.T."/>
            <person name="Entian K.-D."/>
            <person name="Errington J."/>
            <person name="Fabret C."/>
            <person name="Ferrari E."/>
            <person name="Foulger D."/>
            <person name="Fritz C."/>
            <person name="Fujita M."/>
            <person name="Fujita Y."/>
            <person name="Fuma S."/>
            <person name="Galizzi A."/>
            <person name="Galleron N."/>
            <person name="Ghim S.-Y."/>
            <person name="Glaser P."/>
            <person name="Goffeau A."/>
            <person name="Golightly E.J."/>
            <person name="Grandi G."/>
            <person name="Guiseppi G."/>
            <person name="Guy B.J."/>
            <person name="Haga K."/>
            <person name="Haiech J."/>
            <person name="Harwood C.R."/>
            <person name="Henaut A."/>
            <person name="Hilbert H."/>
            <person name="Holsappel S."/>
            <person name="Hosono S."/>
            <person name="Hullo M.-F."/>
            <person name="Itaya M."/>
            <person name="Jones L.-M."/>
            <person name="Joris B."/>
            <person name="Karamata D."/>
            <person name="Kasahara Y."/>
            <person name="Klaerr-Blanchard M."/>
            <person name="Klein C."/>
            <person name="Kobayashi Y."/>
            <person name="Koetter P."/>
            <person name="Koningstein G."/>
            <person name="Krogh S."/>
            <person name="Kumano M."/>
            <person name="Kurita K."/>
            <person name="Lapidus A."/>
            <person name="Lardinois S."/>
            <person name="Lauber J."/>
            <person name="Lazarevic V."/>
            <person name="Lee S.-M."/>
            <person name="Levine A."/>
            <person name="Liu H."/>
            <person name="Masuda S."/>
            <person name="Mauel C."/>
            <person name="Medigue C."/>
            <person name="Medina N."/>
            <person name="Mellado R.P."/>
            <person name="Mizuno M."/>
            <person name="Moestl D."/>
            <person name="Nakai S."/>
            <person name="Noback M."/>
            <person name="Noone D."/>
            <person name="O'Reilly M."/>
            <person name="Ogawa K."/>
            <person name="Ogiwara A."/>
            <person name="Oudega B."/>
            <person name="Park S.-H."/>
            <person name="Parro V."/>
            <person name="Pohl T.M."/>
            <person name="Portetelle D."/>
            <person name="Porwollik S."/>
            <person name="Prescott A.M."/>
            <person name="Presecan E."/>
            <person name="Pujic P."/>
            <person name="Purnelle B."/>
            <person name="Rapoport G."/>
            <person name="Rey M."/>
            <person name="Reynolds S."/>
            <person name="Rieger M."/>
            <person name="Rivolta C."/>
            <person name="Rocha E."/>
            <person name="Roche B."/>
            <person name="Rose M."/>
            <person name="Sadaie Y."/>
            <person name="Sato T."/>
            <person name="Scanlan E."/>
            <person name="Schleich S."/>
            <person name="Schroeter R."/>
            <person name="Scoffone F."/>
            <person name="Sekiguchi J."/>
            <person name="Sekowska A."/>
            <person name="Seror S.J."/>
            <person name="Serror P."/>
            <person name="Shin B.-S."/>
            <person name="Soldo B."/>
            <person name="Sorokin A."/>
            <person name="Tacconi E."/>
            <person name="Takagi T."/>
            <person name="Takahashi H."/>
            <person name="Takemaru K."/>
            <person name="Takeuchi M."/>
            <person name="Tamakoshi A."/>
            <person name="Tanaka T."/>
            <person name="Terpstra P."/>
            <person name="Tognoni A."/>
            <person name="Tosato V."/>
            <person name="Uchiyama S."/>
            <person name="Vandenbol M."/>
            <person name="Vannier F."/>
            <person name="Vassarotti A."/>
            <person name="Viari A."/>
            <person name="Wambutt R."/>
            <person name="Wedler E."/>
            <person name="Wedler H."/>
            <person name="Weitzenegger T."/>
            <person name="Winters P."/>
            <person name="Wipat A."/>
            <person name="Yamamoto H."/>
            <person name="Yamane K."/>
            <person name="Yasumoto K."/>
            <person name="Yata K."/>
            <person name="Yoshida K."/>
            <person name="Yoshikawa H.-F."/>
            <person name="Zumstein E."/>
            <person name="Yoshikawa H."/>
            <person name="Danchin A."/>
        </authorList>
    </citation>
    <scope>NUCLEOTIDE SEQUENCE [LARGE SCALE GENOMIC DNA]</scope>
    <source>
        <strain>168</strain>
    </source>
</reference>
<gene>
    <name type="primary">yoqA</name>
    <name type="ordered locus">BSU20700</name>
</gene>
<feature type="chain" id="PRO_0000369425" description="SPbeta prophage-derived uncharacterized protein YoqA">
    <location>
        <begin position="1"/>
        <end position="116"/>
    </location>
</feature>
<name>YOQA_BACSU</name>
<keyword id="KW-1185">Reference proteome</keyword>
<proteinExistence type="predicted"/>
<protein>
    <recommendedName>
        <fullName>SPbeta prophage-derived uncharacterized protein YoqA</fullName>
    </recommendedName>
</protein>
<organism>
    <name type="scientific">Bacillus subtilis (strain 168)</name>
    <dbReference type="NCBI Taxonomy" id="224308"/>
    <lineage>
        <taxon>Bacteria</taxon>
        <taxon>Bacillati</taxon>
        <taxon>Bacillota</taxon>
        <taxon>Bacilli</taxon>
        <taxon>Bacillales</taxon>
        <taxon>Bacillaceae</taxon>
        <taxon>Bacillus</taxon>
    </lineage>
</organism>
<dbReference type="EMBL" id="AL009126">
    <property type="protein sequence ID" value="CAB13962.1"/>
    <property type="molecule type" value="Genomic_DNA"/>
</dbReference>
<dbReference type="RefSeq" id="NP_389952.1">
    <property type="nucleotide sequence ID" value="NC_000964.3"/>
</dbReference>
<dbReference type="RefSeq" id="WP_010886545.1">
    <property type="nucleotide sequence ID" value="NZ_OZ025638.1"/>
</dbReference>
<dbReference type="FunCoup" id="O34988">
    <property type="interactions" value="31"/>
</dbReference>
<dbReference type="STRING" id="224308.BSU20700"/>
<dbReference type="PaxDb" id="224308-BSU20700"/>
<dbReference type="EnsemblBacteria" id="CAB13962">
    <property type="protein sequence ID" value="CAB13962"/>
    <property type="gene ID" value="BSU_20700"/>
</dbReference>
<dbReference type="GeneID" id="939434"/>
<dbReference type="KEGG" id="bsu:BSU20700"/>
<dbReference type="PATRIC" id="fig|224308.43.peg.2175"/>
<dbReference type="InParanoid" id="O34988"/>
<dbReference type="OrthoDB" id="2892294at2"/>
<dbReference type="BioCyc" id="BSUB:BSU20700-MONOMER"/>
<dbReference type="Proteomes" id="UP000001570">
    <property type="component" value="Chromosome"/>
</dbReference>
<sequence>MMEEIDNNELKFRMITPDGESFLVNSAPIEGWQNDIWKTFDEQKRVFDAEIKKAFEHCNVPLEETIERAELVVDKDDNTVLTIDKLPVLILYKPEFLYSKGKAVQRYKRLYEEDVE</sequence>